<name>UVRC_SACEN</name>
<evidence type="ECO:0000255" key="1">
    <source>
        <dbReference type="HAMAP-Rule" id="MF_00203"/>
    </source>
</evidence>
<evidence type="ECO:0000256" key="2">
    <source>
        <dbReference type="SAM" id="MobiDB-lite"/>
    </source>
</evidence>
<sequence>MADPSTYRPAPGTIPDAPGVYRFHDAEGRVIYVGKAKSLRSRLSSYFADLSGLHPRTRQMVTTATGVRWTVVGTEVEALQLEYSWIKEYDPRFNVRYRDDKSYPVLAVTLHEDFPRLYVTRGPRRKGVRYFGPYAHAWAIRETLDMLLRVFPARTCSAGVFKRHSQIGRPCLLGYIGKCSAPCVGRVDADEHRRIVEDFCDFFAGRTDTLIRKLDREMRQASEELEFERAARLRDDLEALRRAMEKQAVVLGDGTDADVIAFADDELAAAVQVFHIRGGRVRGQRGWVIDKVEETGTAALAERFLTQFYGEQAALAEQADAGGTPVPREVLVPELPPECEAITEWLSGLRGGRVAVRVPQRGDKRALMETVERNAKEAFTQYKLRRAGDLTARSAALQELQDALGLDTAPLRIECIDVSHVQGTDVVASLVVFEDGVPRKSEYRRFAVREGAEGGDVGSIAEVVRRRFARYLKETAPPQEGGNGSAGATAAVENGSTDTVAANGSVGTAAGNGSAHTAAGNGLADTAAGEPEADVAVTPQEAERTGIDPETGRPRKFAYPPNLLVIDGGAPQANAAADALTELGITDVAVIGIAKRLEEVWLPDEAEPVILPRTSEALYLLQRVRDAAHDFAIRYHRQKRSKRMKSSTLDSIPGLGEARRTALLKHFGSLRRLRQATVEEISAVPGFGQRTAETVHAALAAGGGTGESRDNAEGESQ</sequence>
<feature type="chain" id="PRO_1000077829" description="UvrABC system protein C">
    <location>
        <begin position="1"/>
        <end position="717"/>
    </location>
</feature>
<feature type="domain" description="GIY-YIG" evidence="1">
    <location>
        <begin position="16"/>
        <end position="95"/>
    </location>
</feature>
<feature type="domain" description="UVR" evidence="1">
    <location>
        <begin position="208"/>
        <end position="243"/>
    </location>
</feature>
<feature type="region of interest" description="Disordered" evidence="2">
    <location>
        <begin position="517"/>
        <end position="555"/>
    </location>
</feature>
<feature type="region of interest" description="Disordered" evidence="2">
    <location>
        <begin position="696"/>
        <end position="717"/>
    </location>
</feature>
<feature type="compositionally biased region" description="Basic and acidic residues" evidence="2">
    <location>
        <begin position="541"/>
        <end position="553"/>
    </location>
</feature>
<feature type="compositionally biased region" description="Basic and acidic residues" evidence="2">
    <location>
        <begin position="707"/>
        <end position="717"/>
    </location>
</feature>
<accession>A4FBL9</accession>
<proteinExistence type="inferred from homology"/>
<dbReference type="EMBL" id="AM420293">
    <property type="protein sequence ID" value="CAM01444.1"/>
    <property type="molecule type" value="Genomic_DNA"/>
</dbReference>
<dbReference type="RefSeq" id="WP_011873579.1">
    <property type="nucleotide sequence ID" value="NC_009142.1"/>
</dbReference>
<dbReference type="SMR" id="A4FBL9"/>
<dbReference type="STRING" id="405948.SACE_2138"/>
<dbReference type="KEGG" id="sen:SACE_2138"/>
<dbReference type="eggNOG" id="COG0322">
    <property type="taxonomic scope" value="Bacteria"/>
</dbReference>
<dbReference type="HOGENOM" id="CLU_014841_1_1_11"/>
<dbReference type="OrthoDB" id="9804933at2"/>
<dbReference type="Proteomes" id="UP000006728">
    <property type="component" value="Chromosome"/>
</dbReference>
<dbReference type="GO" id="GO:0005737">
    <property type="term" value="C:cytoplasm"/>
    <property type="evidence" value="ECO:0007669"/>
    <property type="project" value="UniProtKB-SubCell"/>
</dbReference>
<dbReference type="GO" id="GO:0009380">
    <property type="term" value="C:excinuclease repair complex"/>
    <property type="evidence" value="ECO:0007669"/>
    <property type="project" value="InterPro"/>
</dbReference>
<dbReference type="GO" id="GO:0003677">
    <property type="term" value="F:DNA binding"/>
    <property type="evidence" value="ECO:0007669"/>
    <property type="project" value="UniProtKB-UniRule"/>
</dbReference>
<dbReference type="GO" id="GO:0009381">
    <property type="term" value="F:excinuclease ABC activity"/>
    <property type="evidence" value="ECO:0007669"/>
    <property type="project" value="UniProtKB-UniRule"/>
</dbReference>
<dbReference type="GO" id="GO:0006289">
    <property type="term" value="P:nucleotide-excision repair"/>
    <property type="evidence" value="ECO:0007669"/>
    <property type="project" value="UniProtKB-UniRule"/>
</dbReference>
<dbReference type="GO" id="GO:0009432">
    <property type="term" value="P:SOS response"/>
    <property type="evidence" value="ECO:0007669"/>
    <property type="project" value="UniProtKB-UniRule"/>
</dbReference>
<dbReference type="CDD" id="cd10434">
    <property type="entry name" value="GIY-YIG_UvrC_Cho"/>
    <property type="match status" value="1"/>
</dbReference>
<dbReference type="FunFam" id="1.10.150.20:FF:000005">
    <property type="entry name" value="UvrABC system protein C"/>
    <property type="match status" value="1"/>
</dbReference>
<dbReference type="FunFam" id="3.40.1440.10:FF:000001">
    <property type="entry name" value="UvrABC system protein C"/>
    <property type="match status" value="1"/>
</dbReference>
<dbReference type="Gene3D" id="1.10.150.20">
    <property type="entry name" value="5' to 3' exonuclease, C-terminal subdomain"/>
    <property type="match status" value="1"/>
</dbReference>
<dbReference type="Gene3D" id="3.40.1440.10">
    <property type="entry name" value="GIY-YIG endonuclease"/>
    <property type="match status" value="1"/>
</dbReference>
<dbReference type="Gene3D" id="4.10.860.10">
    <property type="entry name" value="UVR domain"/>
    <property type="match status" value="1"/>
</dbReference>
<dbReference type="Gene3D" id="3.30.420.340">
    <property type="entry name" value="UvrC, RNAse H endonuclease domain"/>
    <property type="match status" value="1"/>
</dbReference>
<dbReference type="HAMAP" id="MF_00203">
    <property type="entry name" value="UvrC"/>
    <property type="match status" value="1"/>
</dbReference>
<dbReference type="InterPro" id="IPR000305">
    <property type="entry name" value="GIY-YIG_endonuc"/>
</dbReference>
<dbReference type="InterPro" id="IPR035901">
    <property type="entry name" value="GIY-YIG_endonuc_sf"/>
</dbReference>
<dbReference type="InterPro" id="IPR047296">
    <property type="entry name" value="GIY-YIG_UvrC_Cho"/>
</dbReference>
<dbReference type="InterPro" id="IPR003583">
    <property type="entry name" value="Hlx-hairpin-Hlx_DNA-bd_motif"/>
</dbReference>
<dbReference type="InterPro" id="IPR010994">
    <property type="entry name" value="RuvA_2-like"/>
</dbReference>
<dbReference type="InterPro" id="IPR001943">
    <property type="entry name" value="UVR_dom"/>
</dbReference>
<dbReference type="InterPro" id="IPR036876">
    <property type="entry name" value="UVR_dom_sf"/>
</dbReference>
<dbReference type="InterPro" id="IPR050066">
    <property type="entry name" value="UvrABC_protein_C"/>
</dbReference>
<dbReference type="InterPro" id="IPR004791">
    <property type="entry name" value="UvrC"/>
</dbReference>
<dbReference type="InterPro" id="IPR001162">
    <property type="entry name" value="UvrC_RNase_H_dom"/>
</dbReference>
<dbReference type="InterPro" id="IPR038476">
    <property type="entry name" value="UvrC_RNase_H_dom_sf"/>
</dbReference>
<dbReference type="NCBIfam" id="NF001824">
    <property type="entry name" value="PRK00558.1-5"/>
    <property type="match status" value="1"/>
</dbReference>
<dbReference type="NCBIfam" id="TIGR00194">
    <property type="entry name" value="uvrC"/>
    <property type="match status" value="1"/>
</dbReference>
<dbReference type="PANTHER" id="PTHR30562:SF1">
    <property type="entry name" value="UVRABC SYSTEM PROTEIN C"/>
    <property type="match status" value="1"/>
</dbReference>
<dbReference type="PANTHER" id="PTHR30562">
    <property type="entry name" value="UVRC/OXIDOREDUCTASE"/>
    <property type="match status" value="1"/>
</dbReference>
<dbReference type="Pfam" id="PF01541">
    <property type="entry name" value="GIY-YIG"/>
    <property type="match status" value="1"/>
</dbReference>
<dbReference type="Pfam" id="PF14520">
    <property type="entry name" value="HHH_5"/>
    <property type="match status" value="1"/>
</dbReference>
<dbReference type="Pfam" id="PF02151">
    <property type="entry name" value="UVR"/>
    <property type="match status" value="1"/>
</dbReference>
<dbReference type="Pfam" id="PF22920">
    <property type="entry name" value="UvrC_RNaseH"/>
    <property type="match status" value="1"/>
</dbReference>
<dbReference type="Pfam" id="PF08459">
    <property type="entry name" value="UvrC_RNaseH_dom"/>
    <property type="match status" value="1"/>
</dbReference>
<dbReference type="SMART" id="SM00465">
    <property type="entry name" value="GIYc"/>
    <property type="match status" value="1"/>
</dbReference>
<dbReference type="SMART" id="SM00278">
    <property type="entry name" value="HhH1"/>
    <property type="match status" value="2"/>
</dbReference>
<dbReference type="SUPFAM" id="SSF46600">
    <property type="entry name" value="C-terminal UvrC-binding domain of UvrB"/>
    <property type="match status" value="1"/>
</dbReference>
<dbReference type="SUPFAM" id="SSF82771">
    <property type="entry name" value="GIY-YIG endonuclease"/>
    <property type="match status" value="1"/>
</dbReference>
<dbReference type="SUPFAM" id="SSF47781">
    <property type="entry name" value="RuvA domain 2-like"/>
    <property type="match status" value="1"/>
</dbReference>
<dbReference type="PROSITE" id="PS50164">
    <property type="entry name" value="GIY_YIG"/>
    <property type="match status" value="1"/>
</dbReference>
<dbReference type="PROSITE" id="PS50151">
    <property type="entry name" value="UVR"/>
    <property type="match status" value="1"/>
</dbReference>
<dbReference type="PROSITE" id="PS50165">
    <property type="entry name" value="UVRC"/>
    <property type="match status" value="1"/>
</dbReference>
<organism>
    <name type="scientific">Saccharopolyspora erythraea (strain ATCC 11635 / DSM 40517 / JCM 4748 / NBRC 13426 / NCIMB 8594 / NRRL 2338)</name>
    <dbReference type="NCBI Taxonomy" id="405948"/>
    <lineage>
        <taxon>Bacteria</taxon>
        <taxon>Bacillati</taxon>
        <taxon>Actinomycetota</taxon>
        <taxon>Actinomycetes</taxon>
        <taxon>Pseudonocardiales</taxon>
        <taxon>Pseudonocardiaceae</taxon>
        <taxon>Saccharopolyspora</taxon>
    </lineage>
</organism>
<comment type="function">
    <text evidence="1">The UvrABC repair system catalyzes the recognition and processing of DNA lesions. UvrC both incises the 5' and 3' sides of the lesion. The N-terminal half is responsible for the 3' incision and the C-terminal half is responsible for the 5' incision.</text>
</comment>
<comment type="subunit">
    <text evidence="1">Interacts with UvrB in an incision complex.</text>
</comment>
<comment type="subcellular location">
    <subcellularLocation>
        <location evidence="1">Cytoplasm</location>
    </subcellularLocation>
</comment>
<comment type="similarity">
    <text evidence="1">Belongs to the UvrC family.</text>
</comment>
<reference key="1">
    <citation type="journal article" date="2007" name="Nat. Biotechnol.">
        <title>Complete genome sequence of the erythromycin-producing bacterium Saccharopolyspora erythraea NRRL23338.</title>
        <authorList>
            <person name="Oliynyk M."/>
            <person name="Samborskyy M."/>
            <person name="Lester J.B."/>
            <person name="Mironenko T."/>
            <person name="Scott N."/>
            <person name="Dickens S."/>
            <person name="Haydock S.F."/>
            <person name="Leadlay P.F."/>
        </authorList>
    </citation>
    <scope>NUCLEOTIDE SEQUENCE [LARGE SCALE GENOMIC DNA]</scope>
    <source>
        <strain>ATCC 11635 / DSM 40517 / JCM 4748 / NBRC 13426 / NCIMB 8594 / NRRL 2338</strain>
    </source>
</reference>
<protein>
    <recommendedName>
        <fullName evidence="1">UvrABC system protein C</fullName>
        <shortName evidence="1">Protein UvrC</shortName>
    </recommendedName>
    <alternativeName>
        <fullName evidence="1">Excinuclease ABC subunit C</fullName>
    </alternativeName>
</protein>
<keyword id="KW-0963">Cytoplasm</keyword>
<keyword id="KW-0227">DNA damage</keyword>
<keyword id="KW-0228">DNA excision</keyword>
<keyword id="KW-0234">DNA repair</keyword>
<keyword id="KW-0267">Excision nuclease</keyword>
<keyword id="KW-1185">Reference proteome</keyword>
<keyword id="KW-0742">SOS response</keyword>
<gene>
    <name evidence="1" type="primary">uvrC</name>
    <name type="ordered locus">SACE_2138</name>
</gene>